<feature type="signal peptide" evidence="1">
    <location>
        <begin position="1"/>
        <end position="21"/>
    </location>
</feature>
<feature type="chain" id="PRO_1000100721" description="Outer-membrane lipoprotein carrier protein">
    <location>
        <begin position="22"/>
        <end position="203"/>
    </location>
</feature>
<feature type="region of interest" description="Disordered" evidence="2">
    <location>
        <begin position="184"/>
        <end position="203"/>
    </location>
</feature>
<gene>
    <name evidence="1" type="primary">lolA</name>
    <name type="ordered locus">KPK_3637</name>
</gene>
<organism>
    <name type="scientific">Klebsiella pneumoniae (strain 342)</name>
    <dbReference type="NCBI Taxonomy" id="507522"/>
    <lineage>
        <taxon>Bacteria</taxon>
        <taxon>Pseudomonadati</taxon>
        <taxon>Pseudomonadota</taxon>
        <taxon>Gammaproteobacteria</taxon>
        <taxon>Enterobacterales</taxon>
        <taxon>Enterobacteriaceae</taxon>
        <taxon>Klebsiella/Raoultella group</taxon>
        <taxon>Klebsiella</taxon>
        <taxon>Klebsiella pneumoniae complex</taxon>
    </lineage>
</organism>
<evidence type="ECO:0000255" key="1">
    <source>
        <dbReference type="HAMAP-Rule" id="MF_00240"/>
    </source>
</evidence>
<evidence type="ECO:0000256" key="2">
    <source>
        <dbReference type="SAM" id="MobiDB-lite"/>
    </source>
</evidence>
<comment type="function">
    <text evidence="1">Participates in the translocation of lipoproteins from the inner membrane to the outer membrane. Only forms a complex with a lipoprotein if the residue after the N-terminal Cys is not an aspartate (The Asp acts as a targeting signal to indicate that the lipoprotein should stay in the inner membrane).</text>
</comment>
<comment type="subunit">
    <text evidence="1">Monomer.</text>
</comment>
<comment type="subcellular location">
    <subcellularLocation>
        <location evidence="1">Periplasm</location>
    </subcellularLocation>
</comment>
<comment type="similarity">
    <text evidence="1">Belongs to the LolA family.</text>
</comment>
<sequence>MKKLAITCALLSGMVVSQVWADAASDLKSRLDKVSSFHASFTQKVTDGSGNAVQDGQGDLWVKRPNLFNWHMTQPDESVLVSDGKTLWFYNPFVEQATATWLKDATSNTPFMLIARNQSSDWQQYNIKQNGDDFVLTPKSGSGNLKQFTINVGRDGTIHQFSAVEQDDQRSSYQLKSQQNGAVDASKFTFTPPKGVTVDDQRK</sequence>
<accession>B5XYA1</accession>
<dbReference type="EMBL" id="CP000964">
    <property type="protein sequence ID" value="ACI08657.1"/>
    <property type="molecule type" value="Genomic_DNA"/>
</dbReference>
<dbReference type="SMR" id="B5XYA1"/>
<dbReference type="KEGG" id="kpe:KPK_3637"/>
<dbReference type="HOGENOM" id="CLU_087560_1_1_6"/>
<dbReference type="Proteomes" id="UP000001734">
    <property type="component" value="Chromosome"/>
</dbReference>
<dbReference type="GO" id="GO:0030288">
    <property type="term" value="C:outer membrane-bounded periplasmic space"/>
    <property type="evidence" value="ECO:0007669"/>
    <property type="project" value="TreeGrafter"/>
</dbReference>
<dbReference type="GO" id="GO:0044874">
    <property type="term" value="P:lipoprotein localization to outer membrane"/>
    <property type="evidence" value="ECO:0007669"/>
    <property type="project" value="UniProtKB-UniRule"/>
</dbReference>
<dbReference type="GO" id="GO:0042953">
    <property type="term" value="P:lipoprotein transport"/>
    <property type="evidence" value="ECO:0007669"/>
    <property type="project" value="InterPro"/>
</dbReference>
<dbReference type="CDD" id="cd16325">
    <property type="entry name" value="LolA"/>
    <property type="match status" value="1"/>
</dbReference>
<dbReference type="FunFam" id="2.50.20.10:FF:000001">
    <property type="entry name" value="Outer-membrane lipoprotein carrier protein"/>
    <property type="match status" value="1"/>
</dbReference>
<dbReference type="Gene3D" id="2.50.20.10">
    <property type="entry name" value="Lipoprotein localisation LolA/LolB/LppX"/>
    <property type="match status" value="1"/>
</dbReference>
<dbReference type="HAMAP" id="MF_00240">
    <property type="entry name" value="LolA"/>
    <property type="match status" value="1"/>
</dbReference>
<dbReference type="InterPro" id="IPR029046">
    <property type="entry name" value="LolA/LolB/LppX"/>
</dbReference>
<dbReference type="InterPro" id="IPR004564">
    <property type="entry name" value="OM_lipoprot_carrier_LolA-like"/>
</dbReference>
<dbReference type="InterPro" id="IPR018323">
    <property type="entry name" value="OM_lipoprot_carrier_LolA_Pbac"/>
</dbReference>
<dbReference type="NCBIfam" id="TIGR00547">
    <property type="entry name" value="lolA"/>
    <property type="match status" value="1"/>
</dbReference>
<dbReference type="PANTHER" id="PTHR35869">
    <property type="entry name" value="OUTER-MEMBRANE LIPOPROTEIN CARRIER PROTEIN"/>
    <property type="match status" value="1"/>
</dbReference>
<dbReference type="PANTHER" id="PTHR35869:SF1">
    <property type="entry name" value="OUTER-MEMBRANE LIPOPROTEIN CARRIER PROTEIN"/>
    <property type="match status" value="1"/>
</dbReference>
<dbReference type="Pfam" id="PF03548">
    <property type="entry name" value="LolA"/>
    <property type="match status" value="1"/>
</dbReference>
<dbReference type="SUPFAM" id="SSF89392">
    <property type="entry name" value="Prokaryotic lipoproteins and lipoprotein localization factors"/>
    <property type="match status" value="1"/>
</dbReference>
<proteinExistence type="inferred from homology"/>
<keyword id="KW-0143">Chaperone</keyword>
<keyword id="KW-0574">Periplasm</keyword>
<keyword id="KW-0653">Protein transport</keyword>
<keyword id="KW-0732">Signal</keyword>
<keyword id="KW-0813">Transport</keyword>
<protein>
    <recommendedName>
        <fullName evidence="1">Outer-membrane lipoprotein carrier protein</fullName>
    </recommendedName>
</protein>
<reference key="1">
    <citation type="journal article" date="2008" name="PLoS Genet.">
        <title>Complete genome sequence of the N2-fixing broad host range endophyte Klebsiella pneumoniae 342 and virulence predictions verified in mice.</title>
        <authorList>
            <person name="Fouts D.E."/>
            <person name="Tyler H.L."/>
            <person name="DeBoy R.T."/>
            <person name="Daugherty S."/>
            <person name="Ren Q."/>
            <person name="Badger J.H."/>
            <person name="Durkin A.S."/>
            <person name="Huot H."/>
            <person name="Shrivastava S."/>
            <person name="Kothari S."/>
            <person name="Dodson R.J."/>
            <person name="Mohamoud Y."/>
            <person name="Khouri H."/>
            <person name="Roesch L.F.W."/>
            <person name="Krogfelt K.A."/>
            <person name="Struve C."/>
            <person name="Triplett E.W."/>
            <person name="Methe B.A."/>
        </authorList>
    </citation>
    <scope>NUCLEOTIDE SEQUENCE [LARGE SCALE GENOMIC DNA]</scope>
    <source>
        <strain>342</strain>
    </source>
</reference>
<name>LOLA_KLEP3</name>